<accession>Q2NHD1</accession>
<gene>
    <name evidence="1" type="primary">radB</name>
    <name type="ordered locus">Msp_0369</name>
</gene>
<name>RADB_METST</name>
<protein>
    <recommendedName>
        <fullName evidence="1">DNA repair and recombination protein RadB</fullName>
    </recommendedName>
</protein>
<proteinExistence type="inferred from homology"/>
<keyword id="KW-0067">ATP-binding</keyword>
<keyword id="KW-0227">DNA damage</keyword>
<keyword id="KW-0233">DNA recombination</keyword>
<keyword id="KW-0238">DNA-binding</keyword>
<keyword id="KW-0547">Nucleotide-binding</keyword>
<keyword id="KW-1185">Reference proteome</keyword>
<feature type="chain" id="PRO_1000006936" description="DNA repair and recombination protein RadB">
    <location>
        <begin position="1"/>
        <end position="232"/>
    </location>
</feature>
<evidence type="ECO:0000255" key="1">
    <source>
        <dbReference type="HAMAP-Rule" id="MF_00350"/>
    </source>
</evidence>
<reference key="1">
    <citation type="journal article" date="2006" name="J. Bacteriol.">
        <title>The genome sequence of Methanosphaera stadtmanae reveals why this human intestinal archaeon is restricted to methanol and H2 for methane formation and ATP synthesis.</title>
        <authorList>
            <person name="Fricke W.F."/>
            <person name="Seedorf H."/>
            <person name="Henne A."/>
            <person name="Kruer M."/>
            <person name="Liesegang H."/>
            <person name="Hedderich R."/>
            <person name="Gottschalk G."/>
            <person name="Thauer R.K."/>
        </authorList>
    </citation>
    <scope>NUCLEOTIDE SEQUENCE [LARGE SCALE GENOMIC DNA]</scope>
    <source>
        <strain>ATCC 43021 / DSM 3091 / JCM 11832 / MCB-3</strain>
    </source>
</reference>
<comment type="function">
    <text evidence="1">Involved in DNA repair and in homologous recombination. May regulate the cleavage reactions of the branch-structured DNA. Has a very weak ATPase activity that is not stimulated by DNA. Binds DNA but does not promote DNA strands exchange.</text>
</comment>
<comment type="similarity">
    <text evidence="1">Belongs to the eukaryotic RecA-like protein family. RadB subfamily.</text>
</comment>
<sequence length="232" mass="25795">MKTLSDISESVLIPTNSSLDKLLGGGIEKGCITQFYGPPGSGKTNIALKILYEATKNGSKAIYMDTEGGLSLERIQQIAGTDFGSISKNIYILEPKSFDEQILDIQNIEDILKKDKSIDMLIIDSIVALYRVEDGDPSEINKRLGRLMAKLLRLSREYNVAIVITNQIYSPFDSDDLIIEPIGGTVLKYWSKIIIEIEKSVDSLKRTATLQRHKTKAPGQSIKFEIIDRGII</sequence>
<dbReference type="EMBL" id="CP000102">
    <property type="protein sequence ID" value="ABC56772.1"/>
    <property type="molecule type" value="Genomic_DNA"/>
</dbReference>
<dbReference type="SMR" id="Q2NHD1"/>
<dbReference type="STRING" id="339860.Msp_0369"/>
<dbReference type="KEGG" id="mst:Msp_0369"/>
<dbReference type="eggNOG" id="arCOG00417">
    <property type="taxonomic scope" value="Archaea"/>
</dbReference>
<dbReference type="HOGENOM" id="CLU_041732_2_0_2"/>
<dbReference type="OrthoDB" id="17644at2157"/>
<dbReference type="Proteomes" id="UP000001931">
    <property type="component" value="Chromosome"/>
</dbReference>
<dbReference type="GO" id="GO:0005524">
    <property type="term" value="F:ATP binding"/>
    <property type="evidence" value="ECO:0007669"/>
    <property type="project" value="UniProtKB-UniRule"/>
</dbReference>
<dbReference type="GO" id="GO:0016887">
    <property type="term" value="F:ATP hydrolysis activity"/>
    <property type="evidence" value="ECO:0007669"/>
    <property type="project" value="InterPro"/>
</dbReference>
<dbReference type="GO" id="GO:0140664">
    <property type="term" value="F:ATP-dependent DNA damage sensor activity"/>
    <property type="evidence" value="ECO:0007669"/>
    <property type="project" value="InterPro"/>
</dbReference>
<dbReference type="GO" id="GO:0003684">
    <property type="term" value="F:damaged DNA binding"/>
    <property type="evidence" value="ECO:0007669"/>
    <property type="project" value="UniProtKB-UniRule"/>
</dbReference>
<dbReference type="GO" id="GO:0003697">
    <property type="term" value="F:single-stranded DNA binding"/>
    <property type="evidence" value="ECO:0007669"/>
    <property type="project" value="InterPro"/>
</dbReference>
<dbReference type="GO" id="GO:0006310">
    <property type="term" value="P:DNA recombination"/>
    <property type="evidence" value="ECO:0007669"/>
    <property type="project" value="UniProtKB-UniRule"/>
</dbReference>
<dbReference type="GO" id="GO:0006281">
    <property type="term" value="P:DNA repair"/>
    <property type="evidence" value="ECO:0007669"/>
    <property type="project" value="UniProtKB-UniRule"/>
</dbReference>
<dbReference type="CDD" id="cd01394">
    <property type="entry name" value="archRadB"/>
    <property type="match status" value="1"/>
</dbReference>
<dbReference type="Gene3D" id="3.40.50.300">
    <property type="entry name" value="P-loop containing nucleotide triphosphate hydrolases"/>
    <property type="match status" value="1"/>
</dbReference>
<dbReference type="HAMAP" id="MF_00350">
    <property type="entry name" value="RadB"/>
    <property type="match status" value="1"/>
</dbReference>
<dbReference type="InterPro" id="IPR003593">
    <property type="entry name" value="AAA+_ATPase"/>
</dbReference>
<dbReference type="InterPro" id="IPR013632">
    <property type="entry name" value="DNA_recomb/repair_Rad51_C"/>
</dbReference>
<dbReference type="InterPro" id="IPR013765">
    <property type="entry name" value="DNA_recomb/repair_RecA"/>
</dbReference>
<dbReference type="InterPro" id="IPR011939">
    <property type="entry name" value="DNA_repair_and_recomb_RadB"/>
</dbReference>
<dbReference type="InterPro" id="IPR027417">
    <property type="entry name" value="P-loop_NTPase"/>
</dbReference>
<dbReference type="InterPro" id="IPR020588">
    <property type="entry name" value="RecA_ATP-bd"/>
</dbReference>
<dbReference type="NCBIfam" id="TIGR02237">
    <property type="entry name" value="recomb_radB"/>
    <property type="match status" value="1"/>
</dbReference>
<dbReference type="PANTHER" id="PTHR22942:SF47">
    <property type="entry name" value="DNA REPAIR AND RECOMBINATION PROTEIN RADB"/>
    <property type="match status" value="1"/>
</dbReference>
<dbReference type="PANTHER" id="PTHR22942">
    <property type="entry name" value="RECA/RAD51/RADA DNA STRAND-PAIRING FAMILY MEMBER"/>
    <property type="match status" value="1"/>
</dbReference>
<dbReference type="Pfam" id="PF08423">
    <property type="entry name" value="Rad51"/>
    <property type="match status" value="1"/>
</dbReference>
<dbReference type="PIRSF" id="PIRSF003336">
    <property type="entry name" value="RadB"/>
    <property type="match status" value="1"/>
</dbReference>
<dbReference type="PRINTS" id="PR00142">
    <property type="entry name" value="RECA"/>
</dbReference>
<dbReference type="SMART" id="SM00382">
    <property type="entry name" value="AAA"/>
    <property type="match status" value="1"/>
</dbReference>
<dbReference type="SUPFAM" id="SSF52540">
    <property type="entry name" value="P-loop containing nucleoside triphosphate hydrolases"/>
    <property type="match status" value="1"/>
</dbReference>
<dbReference type="PROSITE" id="PS50162">
    <property type="entry name" value="RECA_2"/>
    <property type="match status" value="1"/>
</dbReference>
<organism>
    <name type="scientific">Methanosphaera stadtmanae (strain ATCC 43021 / DSM 3091 / JCM 11832 / MCB-3)</name>
    <dbReference type="NCBI Taxonomy" id="339860"/>
    <lineage>
        <taxon>Archaea</taxon>
        <taxon>Methanobacteriati</taxon>
        <taxon>Methanobacteriota</taxon>
        <taxon>Methanomada group</taxon>
        <taxon>Methanobacteria</taxon>
        <taxon>Methanobacteriales</taxon>
        <taxon>Methanobacteriaceae</taxon>
        <taxon>Methanosphaera</taxon>
    </lineage>
</organism>